<proteinExistence type="inferred from homology"/>
<evidence type="ECO:0000255" key="1">
    <source>
        <dbReference type="HAMAP-Rule" id="MF_00091"/>
    </source>
</evidence>
<accession>A7ZGE2</accession>
<name>LUXS_CAMC1</name>
<dbReference type="EC" id="4.4.1.21" evidence="1"/>
<dbReference type="EMBL" id="CP000792">
    <property type="protein sequence ID" value="EAT99090.1"/>
    <property type="molecule type" value="Genomic_DNA"/>
</dbReference>
<dbReference type="RefSeq" id="WP_012140684.1">
    <property type="nucleotide sequence ID" value="NC_009802.2"/>
</dbReference>
<dbReference type="SMR" id="A7ZGE2"/>
<dbReference type="STRING" id="360104.CCC13826_1857"/>
<dbReference type="KEGG" id="cco:CCC13826_1857"/>
<dbReference type="eggNOG" id="COG1854">
    <property type="taxonomic scope" value="Bacteria"/>
</dbReference>
<dbReference type="HOGENOM" id="CLU_107531_2_0_7"/>
<dbReference type="OrthoDB" id="9788129at2"/>
<dbReference type="Proteomes" id="UP000001121">
    <property type="component" value="Chromosome"/>
</dbReference>
<dbReference type="GO" id="GO:0005506">
    <property type="term" value="F:iron ion binding"/>
    <property type="evidence" value="ECO:0007669"/>
    <property type="project" value="InterPro"/>
</dbReference>
<dbReference type="GO" id="GO:0043768">
    <property type="term" value="F:S-ribosylhomocysteine lyase activity"/>
    <property type="evidence" value="ECO:0007669"/>
    <property type="project" value="UniProtKB-UniRule"/>
</dbReference>
<dbReference type="GO" id="GO:0009372">
    <property type="term" value="P:quorum sensing"/>
    <property type="evidence" value="ECO:0007669"/>
    <property type="project" value="UniProtKB-UniRule"/>
</dbReference>
<dbReference type="Gene3D" id="3.30.1360.80">
    <property type="entry name" value="S-ribosylhomocysteinase (LuxS)"/>
    <property type="match status" value="1"/>
</dbReference>
<dbReference type="HAMAP" id="MF_00091">
    <property type="entry name" value="LuxS"/>
    <property type="match status" value="1"/>
</dbReference>
<dbReference type="InterPro" id="IPR037005">
    <property type="entry name" value="LuxS_sf"/>
</dbReference>
<dbReference type="InterPro" id="IPR011249">
    <property type="entry name" value="Metalloenz_LuxS/M16"/>
</dbReference>
<dbReference type="InterPro" id="IPR003815">
    <property type="entry name" value="S-ribosylhomocysteinase"/>
</dbReference>
<dbReference type="NCBIfam" id="NF002602">
    <property type="entry name" value="PRK02260.1-2"/>
    <property type="match status" value="1"/>
</dbReference>
<dbReference type="PANTHER" id="PTHR35799">
    <property type="entry name" value="S-RIBOSYLHOMOCYSTEINE LYASE"/>
    <property type="match status" value="1"/>
</dbReference>
<dbReference type="PANTHER" id="PTHR35799:SF1">
    <property type="entry name" value="S-RIBOSYLHOMOCYSTEINE LYASE"/>
    <property type="match status" value="1"/>
</dbReference>
<dbReference type="Pfam" id="PF02664">
    <property type="entry name" value="LuxS"/>
    <property type="match status" value="1"/>
</dbReference>
<dbReference type="PIRSF" id="PIRSF006160">
    <property type="entry name" value="AI2"/>
    <property type="match status" value="1"/>
</dbReference>
<dbReference type="PRINTS" id="PR01487">
    <property type="entry name" value="LUXSPROTEIN"/>
</dbReference>
<dbReference type="SUPFAM" id="SSF63411">
    <property type="entry name" value="LuxS/MPP-like metallohydrolase"/>
    <property type="match status" value="1"/>
</dbReference>
<reference key="1">
    <citation type="submission" date="2007-10" db="EMBL/GenBank/DDBJ databases">
        <title>Genome sequence of Campylobacter concisus 13826 isolated from human feces.</title>
        <authorList>
            <person name="Fouts D.E."/>
            <person name="Mongodin E.F."/>
            <person name="Puiu D."/>
            <person name="Sebastian Y."/>
            <person name="Miller W.G."/>
            <person name="Mandrell R.E."/>
            <person name="On S."/>
            <person name="Nelson K.E."/>
        </authorList>
    </citation>
    <scope>NUCLEOTIDE SEQUENCE [LARGE SCALE GENOMIC DNA]</scope>
    <source>
        <strain>13826</strain>
    </source>
</reference>
<feature type="chain" id="PRO_1000004838" description="S-ribosylhomocysteine lyase">
    <location>
        <begin position="1"/>
        <end position="171"/>
    </location>
</feature>
<feature type="binding site" evidence="1">
    <location>
        <position position="54"/>
    </location>
    <ligand>
        <name>Fe cation</name>
        <dbReference type="ChEBI" id="CHEBI:24875"/>
    </ligand>
</feature>
<feature type="binding site" evidence="1">
    <location>
        <position position="58"/>
    </location>
    <ligand>
        <name>Fe cation</name>
        <dbReference type="ChEBI" id="CHEBI:24875"/>
    </ligand>
</feature>
<feature type="binding site" evidence="1">
    <location>
        <position position="128"/>
    </location>
    <ligand>
        <name>Fe cation</name>
        <dbReference type="ChEBI" id="CHEBI:24875"/>
    </ligand>
</feature>
<protein>
    <recommendedName>
        <fullName evidence="1">S-ribosylhomocysteine lyase</fullName>
        <ecNumber evidence="1">4.4.1.21</ecNumber>
    </recommendedName>
    <alternativeName>
        <fullName evidence="1">AI-2 synthesis protein</fullName>
    </alternativeName>
    <alternativeName>
        <fullName evidence="1">Autoinducer-2 production protein LuxS</fullName>
    </alternativeName>
</protein>
<keyword id="KW-0071">Autoinducer synthesis</keyword>
<keyword id="KW-0408">Iron</keyword>
<keyword id="KW-0456">Lyase</keyword>
<keyword id="KW-0479">Metal-binding</keyword>
<keyword id="KW-0673">Quorum sensing</keyword>
<organism>
    <name type="scientific">Campylobacter concisus (strain 13826)</name>
    <dbReference type="NCBI Taxonomy" id="360104"/>
    <lineage>
        <taxon>Bacteria</taxon>
        <taxon>Pseudomonadati</taxon>
        <taxon>Campylobacterota</taxon>
        <taxon>Epsilonproteobacteria</taxon>
        <taxon>Campylobacterales</taxon>
        <taxon>Campylobacteraceae</taxon>
        <taxon>Campylobacter</taxon>
    </lineage>
</organism>
<comment type="function">
    <text evidence="1">Involved in the synthesis of autoinducer 2 (AI-2) which is secreted by bacteria and is used to communicate both the cell density and the metabolic potential of the environment. The regulation of gene expression in response to changes in cell density is called quorum sensing. Catalyzes the transformation of S-ribosylhomocysteine (RHC) to homocysteine (HC) and 4,5-dihydroxy-2,3-pentadione (DPD).</text>
</comment>
<comment type="catalytic activity">
    <reaction evidence="1">
        <text>S-(5-deoxy-D-ribos-5-yl)-L-homocysteine = (S)-4,5-dihydroxypentane-2,3-dione + L-homocysteine</text>
        <dbReference type="Rhea" id="RHEA:17753"/>
        <dbReference type="ChEBI" id="CHEBI:29484"/>
        <dbReference type="ChEBI" id="CHEBI:58195"/>
        <dbReference type="ChEBI" id="CHEBI:58199"/>
        <dbReference type="EC" id="4.4.1.21"/>
    </reaction>
</comment>
<comment type="cofactor">
    <cofactor evidence="1">
        <name>Fe cation</name>
        <dbReference type="ChEBI" id="CHEBI:24875"/>
    </cofactor>
    <text evidence="1">Binds 1 Fe cation per subunit.</text>
</comment>
<comment type="subunit">
    <text evidence="1">Homodimer.</text>
</comment>
<comment type="similarity">
    <text evidence="1">Belongs to the LuxS family.</text>
</comment>
<sequence>MPLLDSFCVDHVKMKAPGVRLAKSMKTPKGDDISVFDLRFCKPNEEILPEKGTHTLEHLFAGFMRNHLNGNGVEIIDISPMGCRTGFYMSVIGTPSEEAVKKAWLASMKDILEVKDQDKIPELNKFQCGTYKMHSLDEAHAIASKILAQGLVIINNDEIKLDVDAMGLKKH</sequence>
<gene>
    <name evidence="1" type="primary">luxS</name>
    <name type="ordered locus">Ccon26_20210</name>
    <name type="ORF">CCC13826_1857</name>
</gene>